<feature type="chain" id="PRO_1000184537" description="ATP synthase subunit c">
    <location>
        <begin position="1"/>
        <end position="75"/>
    </location>
</feature>
<feature type="transmembrane region" description="Helical" evidence="1">
    <location>
        <begin position="8"/>
        <end position="28"/>
    </location>
</feature>
<feature type="transmembrane region" description="Helical" evidence="1">
    <location>
        <begin position="52"/>
        <end position="72"/>
    </location>
</feature>
<feature type="site" description="Reversibly protonated during proton transport" evidence="1">
    <location>
        <position position="58"/>
    </location>
</feature>
<keyword id="KW-0066">ATP synthesis</keyword>
<keyword id="KW-0997">Cell inner membrane</keyword>
<keyword id="KW-1003">Cell membrane</keyword>
<keyword id="KW-0138">CF(0)</keyword>
<keyword id="KW-0375">Hydrogen ion transport</keyword>
<keyword id="KW-0406">Ion transport</keyword>
<keyword id="KW-0446">Lipid-binding</keyword>
<keyword id="KW-0472">Membrane</keyword>
<keyword id="KW-0812">Transmembrane</keyword>
<keyword id="KW-1133">Transmembrane helix</keyword>
<keyword id="KW-0813">Transport</keyword>
<proteinExistence type="inferred from homology"/>
<evidence type="ECO:0000255" key="1">
    <source>
        <dbReference type="HAMAP-Rule" id="MF_01396"/>
    </source>
</evidence>
<sequence>MDLVALKFIAIGLAVFGMLGAGLGIANIFSAMLNGIARNPESEGKMKSYVYIGAAMVEIMGLLAFVLAMLLIFAA</sequence>
<dbReference type="EMBL" id="CP001391">
    <property type="protein sequence ID" value="ACN95134.1"/>
    <property type="molecule type" value="Genomic_DNA"/>
</dbReference>
<dbReference type="RefSeq" id="WP_006014985.1">
    <property type="nucleotide sequence ID" value="NZ_MKIF01000161.1"/>
</dbReference>
<dbReference type="SMR" id="C0R5U2"/>
<dbReference type="STRING" id="66084.WRi_003160"/>
<dbReference type="KEGG" id="wri:WRi_003160"/>
<dbReference type="HOGENOM" id="CLU_148047_4_0_5"/>
<dbReference type="Proteomes" id="UP000001293">
    <property type="component" value="Chromosome"/>
</dbReference>
<dbReference type="GO" id="GO:0005886">
    <property type="term" value="C:plasma membrane"/>
    <property type="evidence" value="ECO:0007669"/>
    <property type="project" value="UniProtKB-SubCell"/>
</dbReference>
<dbReference type="GO" id="GO:0045259">
    <property type="term" value="C:proton-transporting ATP synthase complex"/>
    <property type="evidence" value="ECO:0007669"/>
    <property type="project" value="UniProtKB-KW"/>
</dbReference>
<dbReference type="GO" id="GO:0033177">
    <property type="term" value="C:proton-transporting two-sector ATPase complex, proton-transporting domain"/>
    <property type="evidence" value="ECO:0007669"/>
    <property type="project" value="InterPro"/>
</dbReference>
<dbReference type="GO" id="GO:0008289">
    <property type="term" value="F:lipid binding"/>
    <property type="evidence" value="ECO:0007669"/>
    <property type="project" value="UniProtKB-KW"/>
</dbReference>
<dbReference type="GO" id="GO:0046933">
    <property type="term" value="F:proton-transporting ATP synthase activity, rotational mechanism"/>
    <property type="evidence" value="ECO:0007669"/>
    <property type="project" value="UniProtKB-UniRule"/>
</dbReference>
<dbReference type="CDD" id="cd18182">
    <property type="entry name" value="ATP-synt_Fo_c_ATP5G3"/>
    <property type="match status" value="1"/>
</dbReference>
<dbReference type="Gene3D" id="1.20.20.10">
    <property type="entry name" value="F1F0 ATP synthase subunit C"/>
    <property type="match status" value="1"/>
</dbReference>
<dbReference type="HAMAP" id="MF_01396">
    <property type="entry name" value="ATP_synth_c_bact"/>
    <property type="match status" value="1"/>
</dbReference>
<dbReference type="InterPro" id="IPR005953">
    <property type="entry name" value="ATP_synth_csu_bac/chlpt"/>
</dbReference>
<dbReference type="InterPro" id="IPR000454">
    <property type="entry name" value="ATP_synth_F0_csu"/>
</dbReference>
<dbReference type="InterPro" id="IPR020537">
    <property type="entry name" value="ATP_synth_F0_csu_DDCD_BS"/>
</dbReference>
<dbReference type="InterPro" id="IPR038662">
    <property type="entry name" value="ATP_synth_F0_csu_sf"/>
</dbReference>
<dbReference type="InterPro" id="IPR002379">
    <property type="entry name" value="ATPase_proteolipid_c-like_dom"/>
</dbReference>
<dbReference type="InterPro" id="IPR035921">
    <property type="entry name" value="F/V-ATP_Csub_sf"/>
</dbReference>
<dbReference type="NCBIfam" id="TIGR01260">
    <property type="entry name" value="ATP_synt_c"/>
    <property type="match status" value="1"/>
</dbReference>
<dbReference type="NCBIfam" id="NF005733">
    <property type="entry name" value="PRK07558.1"/>
    <property type="match status" value="1"/>
</dbReference>
<dbReference type="PANTHER" id="PTHR10031">
    <property type="entry name" value="ATP SYNTHASE LIPID-BINDING PROTEIN, MITOCHONDRIAL"/>
    <property type="match status" value="1"/>
</dbReference>
<dbReference type="PANTHER" id="PTHR10031:SF0">
    <property type="entry name" value="ATPASE PROTEIN 9"/>
    <property type="match status" value="1"/>
</dbReference>
<dbReference type="Pfam" id="PF00137">
    <property type="entry name" value="ATP-synt_C"/>
    <property type="match status" value="1"/>
</dbReference>
<dbReference type="PRINTS" id="PR00124">
    <property type="entry name" value="ATPASEC"/>
</dbReference>
<dbReference type="SUPFAM" id="SSF81333">
    <property type="entry name" value="F1F0 ATP synthase subunit C"/>
    <property type="match status" value="1"/>
</dbReference>
<dbReference type="PROSITE" id="PS00605">
    <property type="entry name" value="ATPASE_C"/>
    <property type="match status" value="1"/>
</dbReference>
<organism>
    <name type="scientific">Wolbachia sp. subsp. Drosophila simulans (strain wRi)</name>
    <dbReference type="NCBI Taxonomy" id="66084"/>
    <lineage>
        <taxon>Bacteria</taxon>
        <taxon>Pseudomonadati</taxon>
        <taxon>Pseudomonadota</taxon>
        <taxon>Alphaproteobacteria</taxon>
        <taxon>Rickettsiales</taxon>
        <taxon>Anaplasmataceae</taxon>
        <taxon>Wolbachieae</taxon>
        <taxon>Wolbachia</taxon>
    </lineage>
</organism>
<gene>
    <name evidence="1" type="primary">atpE</name>
    <name type="ordered locus">WRi_003160</name>
</gene>
<protein>
    <recommendedName>
        <fullName evidence="1">ATP synthase subunit c</fullName>
    </recommendedName>
    <alternativeName>
        <fullName evidence="1">ATP synthase F(0) sector subunit c</fullName>
    </alternativeName>
    <alternativeName>
        <fullName evidence="1">F-type ATPase subunit c</fullName>
        <shortName evidence="1">F-ATPase subunit c</shortName>
    </alternativeName>
    <alternativeName>
        <fullName evidence="1">Lipid-binding protein</fullName>
    </alternativeName>
</protein>
<name>ATPL_WOLWR</name>
<accession>C0R5U2</accession>
<comment type="function">
    <text evidence="1">F(1)F(0) ATP synthase produces ATP from ADP in the presence of a proton or sodium gradient. F-type ATPases consist of two structural domains, F(1) containing the extramembraneous catalytic core and F(0) containing the membrane proton channel, linked together by a central stalk and a peripheral stalk. During catalysis, ATP synthesis in the catalytic domain of F(1) is coupled via a rotary mechanism of the central stalk subunits to proton translocation.</text>
</comment>
<comment type="function">
    <text evidence="1">Key component of the F(0) channel; it plays a direct role in translocation across the membrane. A homomeric c-ring of between 10-14 subunits forms the central stalk rotor element with the F(1) delta and epsilon subunits.</text>
</comment>
<comment type="subunit">
    <text evidence="1">F-type ATPases have 2 components, F(1) - the catalytic core - and F(0) - the membrane proton channel. F(1) has five subunits: alpha(3), beta(3), gamma(1), delta(1), epsilon(1). F(0) has three main subunits: a(1), b(2) and c(10-14). The alpha and beta chains form an alternating ring which encloses part of the gamma chain. F(1) is attached to F(0) by a central stalk formed by the gamma and epsilon chains, while a peripheral stalk is formed by the delta and b chains.</text>
</comment>
<comment type="subcellular location">
    <subcellularLocation>
        <location evidence="1">Cell inner membrane</location>
        <topology evidence="1">Multi-pass membrane protein</topology>
    </subcellularLocation>
</comment>
<comment type="similarity">
    <text evidence="1">Belongs to the ATPase C chain family.</text>
</comment>
<reference key="1">
    <citation type="journal article" date="2009" name="Proc. Natl. Acad. Sci. U.S.A.">
        <title>The mosaic genome structure of the Wolbachia wRi strain infecting Drosophila simulans.</title>
        <authorList>
            <person name="Klasson L."/>
            <person name="Westberg J."/>
            <person name="Sapountzis P."/>
            <person name="Naeslund K."/>
            <person name="Lutnaes Y."/>
            <person name="Darby A.C."/>
            <person name="Veneti Z."/>
            <person name="Chen L."/>
            <person name="Braig H.R."/>
            <person name="Garrett R."/>
            <person name="Bourtzis K."/>
            <person name="Andersson S.G."/>
        </authorList>
    </citation>
    <scope>NUCLEOTIDE SEQUENCE [LARGE SCALE GENOMIC DNA]</scope>
    <source>
        <strain>wRi</strain>
    </source>
</reference>